<name>RL9_LACH4</name>
<feature type="chain" id="PRO_1000072448" description="Large ribosomal subunit protein bL9">
    <location>
        <begin position="1"/>
        <end position="151"/>
    </location>
</feature>
<keyword id="KW-0687">Ribonucleoprotein</keyword>
<keyword id="KW-0689">Ribosomal protein</keyword>
<keyword id="KW-0694">RNA-binding</keyword>
<keyword id="KW-0699">rRNA-binding</keyword>
<organism>
    <name type="scientific">Lactobacillus helveticus (strain DPC 4571)</name>
    <dbReference type="NCBI Taxonomy" id="405566"/>
    <lineage>
        <taxon>Bacteria</taxon>
        <taxon>Bacillati</taxon>
        <taxon>Bacillota</taxon>
        <taxon>Bacilli</taxon>
        <taxon>Lactobacillales</taxon>
        <taxon>Lactobacillaceae</taxon>
        <taxon>Lactobacillus</taxon>
    </lineage>
</organism>
<protein>
    <recommendedName>
        <fullName evidence="1">Large ribosomal subunit protein bL9</fullName>
    </recommendedName>
    <alternativeName>
        <fullName evidence="2">50S ribosomal protein L9</fullName>
    </alternativeName>
</protein>
<proteinExistence type="inferred from homology"/>
<accession>A8YW53</accession>
<dbReference type="EMBL" id="CP000517">
    <property type="protein sequence ID" value="ABX26310.1"/>
    <property type="molecule type" value="Genomic_DNA"/>
</dbReference>
<dbReference type="RefSeq" id="WP_012211202.1">
    <property type="nucleotide sequence ID" value="NC_010080.1"/>
</dbReference>
<dbReference type="SMR" id="A8YW53"/>
<dbReference type="KEGG" id="lhe:lhv_0017"/>
<dbReference type="eggNOG" id="COG0359">
    <property type="taxonomic scope" value="Bacteria"/>
</dbReference>
<dbReference type="HOGENOM" id="CLU_078938_3_2_9"/>
<dbReference type="Proteomes" id="UP000000790">
    <property type="component" value="Chromosome"/>
</dbReference>
<dbReference type="GO" id="GO:1990904">
    <property type="term" value="C:ribonucleoprotein complex"/>
    <property type="evidence" value="ECO:0007669"/>
    <property type="project" value="UniProtKB-KW"/>
</dbReference>
<dbReference type="GO" id="GO:0005840">
    <property type="term" value="C:ribosome"/>
    <property type="evidence" value="ECO:0007669"/>
    <property type="project" value="UniProtKB-KW"/>
</dbReference>
<dbReference type="GO" id="GO:0019843">
    <property type="term" value="F:rRNA binding"/>
    <property type="evidence" value="ECO:0007669"/>
    <property type="project" value="UniProtKB-UniRule"/>
</dbReference>
<dbReference type="GO" id="GO:0003735">
    <property type="term" value="F:structural constituent of ribosome"/>
    <property type="evidence" value="ECO:0007669"/>
    <property type="project" value="InterPro"/>
</dbReference>
<dbReference type="GO" id="GO:0006412">
    <property type="term" value="P:translation"/>
    <property type="evidence" value="ECO:0007669"/>
    <property type="project" value="UniProtKB-UniRule"/>
</dbReference>
<dbReference type="Gene3D" id="3.10.430.100">
    <property type="entry name" value="Ribosomal protein L9, C-terminal domain"/>
    <property type="match status" value="1"/>
</dbReference>
<dbReference type="Gene3D" id="3.40.5.10">
    <property type="entry name" value="Ribosomal protein L9, N-terminal domain"/>
    <property type="match status" value="1"/>
</dbReference>
<dbReference type="HAMAP" id="MF_00503">
    <property type="entry name" value="Ribosomal_bL9"/>
    <property type="match status" value="1"/>
</dbReference>
<dbReference type="InterPro" id="IPR000244">
    <property type="entry name" value="Ribosomal_bL9"/>
</dbReference>
<dbReference type="InterPro" id="IPR009027">
    <property type="entry name" value="Ribosomal_bL9/RNase_H1_N"/>
</dbReference>
<dbReference type="InterPro" id="IPR020594">
    <property type="entry name" value="Ribosomal_bL9_bac/chp"/>
</dbReference>
<dbReference type="InterPro" id="IPR020069">
    <property type="entry name" value="Ribosomal_bL9_C"/>
</dbReference>
<dbReference type="InterPro" id="IPR036791">
    <property type="entry name" value="Ribosomal_bL9_C_sf"/>
</dbReference>
<dbReference type="InterPro" id="IPR020070">
    <property type="entry name" value="Ribosomal_bL9_N"/>
</dbReference>
<dbReference type="InterPro" id="IPR036935">
    <property type="entry name" value="Ribosomal_bL9_N_sf"/>
</dbReference>
<dbReference type="NCBIfam" id="TIGR00158">
    <property type="entry name" value="L9"/>
    <property type="match status" value="1"/>
</dbReference>
<dbReference type="PANTHER" id="PTHR21368">
    <property type="entry name" value="50S RIBOSOMAL PROTEIN L9"/>
    <property type="match status" value="1"/>
</dbReference>
<dbReference type="Pfam" id="PF03948">
    <property type="entry name" value="Ribosomal_L9_C"/>
    <property type="match status" value="1"/>
</dbReference>
<dbReference type="Pfam" id="PF01281">
    <property type="entry name" value="Ribosomal_L9_N"/>
    <property type="match status" value="1"/>
</dbReference>
<dbReference type="SUPFAM" id="SSF55658">
    <property type="entry name" value="L9 N-domain-like"/>
    <property type="match status" value="1"/>
</dbReference>
<dbReference type="SUPFAM" id="SSF55653">
    <property type="entry name" value="Ribosomal protein L9 C-domain"/>
    <property type="match status" value="1"/>
</dbReference>
<dbReference type="PROSITE" id="PS00651">
    <property type="entry name" value="RIBOSOMAL_L9"/>
    <property type="match status" value="1"/>
</dbReference>
<reference key="1">
    <citation type="journal article" date="2008" name="J. Bacteriol.">
        <title>Genome sequence of Lactobacillus helveticus: an organism distinguished by selective gene loss and IS element expansion.</title>
        <authorList>
            <person name="Callanan M."/>
            <person name="Kaleta P."/>
            <person name="O'Callaghan J."/>
            <person name="O'Sullivan O."/>
            <person name="Jordan K."/>
            <person name="McAuliffe O."/>
            <person name="Sangrador-Vegas A."/>
            <person name="Slattery L."/>
            <person name="Fitzgerald G.F."/>
            <person name="Beresford T."/>
            <person name="Ross R.P."/>
        </authorList>
    </citation>
    <scope>NUCLEOTIDE SEQUENCE [LARGE SCALE GENOMIC DNA]</scope>
    <source>
        <strain>DPC 4571</strain>
    </source>
</reference>
<evidence type="ECO:0000255" key="1">
    <source>
        <dbReference type="HAMAP-Rule" id="MF_00503"/>
    </source>
</evidence>
<evidence type="ECO:0000305" key="2"/>
<comment type="function">
    <text evidence="1">Binds to the 23S rRNA.</text>
</comment>
<comment type="similarity">
    <text evidence="1">Belongs to the bacterial ribosomal protein bL9 family.</text>
</comment>
<sequence>MKVIFTQDVRGRGKRGQVKEVPDGYAQNYLIKRGLAKVATKGNMNTLKRVEANEKAAYEAEKAEAEKIKAELEKDDTIVNFKSKAGTDSRLFGSISSKKIVEGLEKQYGIKVDKRKLNLPEPIKTLGYTNVHAKLFKGVEATIRVHVTEQD</sequence>
<gene>
    <name evidence="1" type="primary">rplI</name>
    <name type="ordered locus">lhv_0017</name>
</gene>